<gene>
    <name evidence="1" type="primary">rplY</name>
    <name evidence="1" type="synonym">ctc</name>
    <name type="ordered locus">CTC_00878</name>
</gene>
<protein>
    <recommendedName>
        <fullName evidence="1">Large ribosomal subunit protein bL25</fullName>
    </recommendedName>
    <alternativeName>
        <fullName evidence="2">50S ribosomal protein L25</fullName>
    </alternativeName>
    <alternativeName>
        <fullName evidence="1">General stress protein CTC</fullName>
    </alternativeName>
</protein>
<accession>Q896W8</accession>
<sequence>MAEILIATERNEKGKTARKKGFIPGIIYGKDREGQSINFERGKLIAFLKEKGEKSKMNFQLNGENKQGIIKEVGRDAVTSSIIHIDIQEVSALEKVRWTIPIFFEGREQLKKKELYIQVYLTEVEVEGKASDIPNNITLNVGNLELGEEVKVKDLNIGSNIRIFNELENTIAIISSSQNTNKNIEEEDPSEVE</sequence>
<feature type="chain" id="PRO_0000181538" description="Large ribosomal subunit protein bL25">
    <location>
        <begin position="1"/>
        <end position="193"/>
    </location>
</feature>
<dbReference type="EMBL" id="AE015927">
    <property type="protein sequence ID" value="AAO35472.1"/>
    <property type="molecule type" value="Genomic_DNA"/>
</dbReference>
<dbReference type="RefSeq" id="WP_011099134.1">
    <property type="nucleotide sequence ID" value="NC_004557.1"/>
</dbReference>
<dbReference type="SMR" id="Q896W8"/>
<dbReference type="STRING" id="212717.CTC_00878"/>
<dbReference type="GeneID" id="24253667"/>
<dbReference type="KEGG" id="ctc:CTC_00878"/>
<dbReference type="HOGENOM" id="CLU_075939_2_2_9"/>
<dbReference type="OrthoDB" id="9790002at2"/>
<dbReference type="Proteomes" id="UP000001412">
    <property type="component" value="Chromosome"/>
</dbReference>
<dbReference type="GO" id="GO:0022625">
    <property type="term" value="C:cytosolic large ribosomal subunit"/>
    <property type="evidence" value="ECO:0007669"/>
    <property type="project" value="TreeGrafter"/>
</dbReference>
<dbReference type="GO" id="GO:0008097">
    <property type="term" value="F:5S rRNA binding"/>
    <property type="evidence" value="ECO:0007669"/>
    <property type="project" value="InterPro"/>
</dbReference>
<dbReference type="GO" id="GO:0003735">
    <property type="term" value="F:structural constituent of ribosome"/>
    <property type="evidence" value="ECO:0007669"/>
    <property type="project" value="InterPro"/>
</dbReference>
<dbReference type="GO" id="GO:0006412">
    <property type="term" value="P:translation"/>
    <property type="evidence" value="ECO:0007669"/>
    <property type="project" value="UniProtKB-UniRule"/>
</dbReference>
<dbReference type="CDD" id="cd00495">
    <property type="entry name" value="Ribosomal_L25_TL5_CTC"/>
    <property type="match status" value="1"/>
</dbReference>
<dbReference type="Gene3D" id="2.170.120.20">
    <property type="entry name" value="Ribosomal protein L25, beta domain"/>
    <property type="match status" value="1"/>
</dbReference>
<dbReference type="Gene3D" id="2.40.240.10">
    <property type="entry name" value="Ribosomal Protein L25, Chain P"/>
    <property type="match status" value="1"/>
</dbReference>
<dbReference type="HAMAP" id="MF_01334">
    <property type="entry name" value="Ribosomal_bL25_CTC"/>
    <property type="match status" value="1"/>
</dbReference>
<dbReference type="InterPro" id="IPR020056">
    <property type="entry name" value="Rbsml_bL25/Gln-tRNA_synth_N"/>
</dbReference>
<dbReference type="InterPro" id="IPR011035">
    <property type="entry name" value="Ribosomal_bL25/Gln-tRNA_synth"/>
</dbReference>
<dbReference type="InterPro" id="IPR020057">
    <property type="entry name" value="Ribosomal_bL25_b-dom"/>
</dbReference>
<dbReference type="InterPro" id="IPR037121">
    <property type="entry name" value="Ribosomal_bL25_C"/>
</dbReference>
<dbReference type="InterPro" id="IPR001021">
    <property type="entry name" value="Ribosomal_bL25_long"/>
</dbReference>
<dbReference type="InterPro" id="IPR029751">
    <property type="entry name" value="Ribosomal_L25_dom"/>
</dbReference>
<dbReference type="InterPro" id="IPR020930">
    <property type="entry name" value="Ribosomal_uL5_bac-type"/>
</dbReference>
<dbReference type="NCBIfam" id="TIGR00731">
    <property type="entry name" value="bL25_bact_ctc"/>
    <property type="match status" value="1"/>
</dbReference>
<dbReference type="PANTHER" id="PTHR33284">
    <property type="entry name" value="RIBOSOMAL PROTEIN L25/GLN-TRNA SYNTHETASE, ANTI-CODON-BINDING DOMAIN-CONTAINING PROTEIN"/>
    <property type="match status" value="1"/>
</dbReference>
<dbReference type="PANTHER" id="PTHR33284:SF1">
    <property type="entry name" value="RIBOSOMAL PROTEIN L25_GLN-TRNA SYNTHETASE, ANTI-CODON-BINDING DOMAIN-CONTAINING PROTEIN"/>
    <property type="match status" value="1"/>
</dbReference>
<dbReference type="Pfam" id="PF01386">
    <property type="entry name" value="Ribosomal_L25p"/>
    <property type="match status" value="1"/>
</dbReference>
<dbReference type="Pfam" id="PF14693">
    <property type="entry name" value="Ribosomal_TL5_C"/>
    <property type="match status" value="1"/>
</dbReference>
<dbReference type="SUPFAM" id="SSF50715">
    <property type="entry name" value="Ribosomal protein L25-like"/>
    <property type="match status" value="1"/>
</dbReference>
<keyword id="KW-1185">Reference proteome</keyword>
<keyword id="KW-0687">Ribonucleoprotein</keyword>
<keyword id="KW-0689">Ribosomal protein</keyword>
<keyword id="KW-0694">RNA-binding</keyword>
<keyword id="KW-0699">rRNA-binding</keyword>
<comment type="function">
    <text evidence="1">This is one of the proteins that binds to the 5S RNA in the ribosome where it forms part of the central protuberance.</text>
</comment>
<comment type="subunit">
    <text evidence="1">Part of the 50S ribosomal subunit; part of the 5S rRNA/L5/L18/L25 subcomplex. Contacts the 5S rRNA. Binds to the 5S rRNA independently of L5 and L18.</text>
</comment>
<comment type="similarity">
    <text evidence="1">Belongs to the bacterial ribosomal protein bL25 family. CTC subfamily.</text>
</comment>
<organism>
    <name type="scientific">Clostridium tetani (strain Massachusetts / E88)</name>
    <dbReference type="NCBI Taxonomy" id="212717"/>
    <lineage>
        <taxon>Bacteria</taxon>
        <taxon>Bacillati</taxon>
        <taxon>Bacillota</taxon>
        <taxon>Clostridia</taxon>
        <taxon>Eubacteriales</taxon>
        <taxon>Clostridiaceae</taxon>
        <taxon>Clostridium</taxon>
    </lineage>
</organism>
<evidence type="ECO:0000255" key="1">
    <source>
        <dbReference type="HAMAP-Rule" id="MF_01334"/>
    </source>
</evidence>
<evidence type="ECO:0000305" key="2"/>
<proteinExistence type="inferred from homology"/>
<reference key="1">
    <citation type="journal article" date="2003" name="Proc. Natl. Acad. Sci. U.S.A.">
        <title>The genome sequence of Clostridium tetani, the causative agent of tetanus disease.</title>
        <authorList>
            <person name="Brueggemann H."/>
            <person name="Baeumer S."/>
            <person name="Fricke W.F."/>
            <person name="Wiezer A."/>
            <person name="Liesegang H."/>
            <person name="Decker I."/>
            <person name="Herzberg C."/>
            <person name="Martinez-Arias R."/>
            <person name="Merkl R."/>
            <person name="Henne A."/>
            <person name="Gottschalk G."/>
        </authorList>
    </citation>
    <scope>NUCLEOTIDE SEQUENCE [LARGE SCALE GENOMIC DNA]</scope>
    <source>
        <strain>Massachusetts / E88</strain>
    </source>
</reference>
<name>RL25_CLOTE</name>